<comment type="function">
    <text evidence="1">This protein specifically catalyzes the removal of signal peptides from prolipoproteins.</text>
</comment>
<comment type="catalytic activity">
    <reaction evidence="1">
        <text>Release of signal peptides from bacterial membrane prolipoproteins. Hydrolyzes -Xaa-Yaa-Zaa-|-(S,diacylglyceryl)Cys-, in which Xaa is hydrophobic (preferably Leu), and Yaa (Ala or Ser) and Zaa (Gly or Ala) have small, neutral side chains.</text>
        <dbReference type="EC" id="3.4.23.36"/>
    </reaction>
</comment>
<comment type="pathway">
    <text evidence="1">Protein modification; lipoprotein biosynthesis (signal peptide cleavage).</text>
</comment>
<comment type="subcellular location">
    <subcellularLocation>
        <location evidence="1">Cell inner membrane</location>
        <topology evidence="1">Multi-pass membrane protein</topology>
    </subcellularLocation>
</comment>
<comment type="similarity">
    <text evidence="1 2">Belongs to the peptidase A8 family.</text>
</comment>
<comment type="sequence caution" evidence="2">
    <conflict type="erroneous initiation">
        <sequence resource="EMBL-CDS" id="AAP98485"/>
    </conflict>
</comment>
<name>LSPA_CHLPN</name>
<evidence type="ECO:0000255" key="1">
    <source>
        <dbReference type="HAMAP-Rule" id="MF_00161"/>
    </source>
</evidence>
<evidence type="ECO:0000305" key="2"/>
<reference key="1">
    <citation type="journal article" date="1999" name="Nat. Genet.">
        <title>Comparative genomes of Chlamydia pneumoniae and C. trachomatis.</title>
        <authorList>
            <person name="Kalman S."/>
            <person name="Mitchell W.P."/>
            <person name="Marathe R."/>
            <person name="Lammel C.J."/>
            <person name="Fan J."/>
            <person name="Hyman R.W."/>
            <person name="Olinger L."/>
            <person name="Grimwood J."/>
            <person name="Davis R.W."/>
            <person name="Stephens R.S."/>
        </authorList>
    </citation>
    <scope>NUCLEOTIDE SEQUENCE [LARGE SCALE GENOMIC DNA]</scope>
    <source>
        <strain>CWL029</strain>
    </source>
</reference>
<reference key="2">
    <citation type="journal article" date="2000" name="Nucleic Acids Res.">
        <title>Genome sequences of Chlamydia trachomatis MoPn and Chlamydia pneumoniae AR39.</title>
        <authorList>
            <person name="Read T.D."/>
            <person name="Brunham R.C."/>
            <person name="Shen C."/>
            <person name="Gill S.R."/>
            <person name="Heidelberg J.F."/>
            <person name="White O."/>
            <person name="Hickey E.K."/>
            <person name="Peterson J.D."/>
            <person name="Utterback T.R."/>
            <person name="Berry K.J."/>
            <person name="Bass S."/>
            <person name="Linher K.D."/>
            <person name="Weidman J.F."/>
            <person name="Khouri H.M."/>
            <person name="Craven B."/>
            <person name="Bowman C."/>
            <person name="Dodson R.J."/>
            <person name="Gwinn M.L."/>
            <person name="Nelson W.C."/>
            <person name="DeBoy R.T."/>
            <person name="Kolonay J.F."/>
            <person name="McClarty G."/>
            <person name="Salzberg S.L."/>
            <person name="Eisen J.A."/>
            <person name="Fraser C.M."/>
        </authorList>
    </citation>
    <scope>NUCLEOTIDE SEQUENCE [LARGE SCALE GENOMIC DNA]</scope>
    <source>
        <strain>AR39</strain>
    </source>
</reference>
<reference key="3">
    <citation type="journal article" date="2000" name="Nucleic Acids Res.">
        <title>Comparison of whole genome sequences of Chlamydia pneumoniae J138 from Japan and CWL029 from USA.</title>
        <authorList>
            <person name="Shirai M."/>
            <person name="Hirakawa H."/>
            <person name="Kimoto M."/>
            <person name="Tabuchi M."/>
            <person name="Kishi F."/>
            <person name="Ouchi K."/>
            <person name="Shiba T."/>
            <person name="Ishii K."/>
            <person name="Hattori M."/>
            <person name="Kuhara S."/>
            <person name="Nakazawa T."/>
        </authorList>
    </citation>
    <scope>NUCLEOTIDE SEQUENCE [LARGE SCALE GENOMIC DNA]</scope>
    <source>
        <strain>J138</strain>
    </source>
</reference>
<reference key="4">
    <citation type="submission" date="2002-05" db="EMBL/GenBank/DDBJ databases">
        <title>The genome sequence of Chlamydia pneumoniae TW183 and comparison with other Chlamydia strains based on whole genome sequence analysis.</title>
        <authorList>
            <person name="Geng M.M."/>
            <person name="Schuhmacher A."/>
            <person name="Muehldorfer I."/>
            <person name="Bensch K.W."/>
            <person name="Schaefer K.P."/>
            <person name="Schneider S."/>
            <person name="Pohl T."/>
            <person name="Essig A."/>
            <person name="Marre R."/>
            <person name="Melchers K."/>
        </authorList>
    </citation>
    <scope>NUCLEOTIDE SEQUENCE [LARGE SCALE GENOMIC DNA]</scope>
    <source>
        <strain>TW-183</strain>
    </source>
</reference>
<dbReference type="EC" id="3.4.23.36" evidence="1"/>
<dbReference type="EMBL" id="AE001363">
    <property type="protein sequence ID" value="AAD18675.1"/>
    <property type="molecule type" value="Genomic_DNA"/>
</dbReference>
<dbReference type="EMBL" id="AE002161">
    <property type="protein sequence ID" value="AAF38086.1"/>
    <property type="molecule type" value="Genomic_DNA"/>
</dbReference>
<dbReference type="EMBL" id="BA000008">
    <property type="protein sequence ID" value="BAA98741.1"/>
    <property type="molecule type" value="Genomic_DNA"/>
</dbReference>
<dbReference type="EMBL" id="AE009440">
    <property type="protein sequence ID" value="AAP98485.1"/>
    <property type="status" value="ALT_INIT"/>
    <property type="molecule type" value="Genomic_DNA"/>
</dbReference>
<dbReference type="PIR" id="C86557">
    <property type="entry name" value="C86557"/>
</dbReference>
<dbReference type="PIR" id="H72066">
    <property type="entry name" value="H72066"/>
</dbReference>
<dbReference type="RefSeq" id="NP_224731.1">
    <property type="nucleotide sequence ID" value="NC_000922.1"/>
</dbReference>
<dbReference type="RefSeq" id="WP_010883173.1">
    <property type="nucleotide sequence ID" value="NZ_LN847257.1"/>
</dbReference>
<dbReference type="SMR" id="Q9Z817"/>
<dbReference type="STRING" id="406984.CPK_ORF01050"/>
<dbReference type="GeneID" id="45050577"/>
<dbReference type="KEGG" id="cpa:CP_0217"/>
<dbReference type="KEGG" id="cpj:lspA"/>
<dbReference type="KEGG" id="cpn:CPn_0535"/>
<dbReference type="KEGG" id="cpt:CpB0556"/>
<dbReference type="PATRIC" id="fig|115713.3.peg.595"/>
<dbReference type="eggNOG" id="COG0597">
    <property type="taxonomic scope" value="Bacteria"/>
</dbReference>
<dbReference type="HOGENOM" id="CLU_083252_3_0_0"/>
<dbReference type="OrthoDB" id="9810259at2"/>
<dbReference type="UniPathway" id="UPA00665"/>
<dbReference type="Proteomes" id="UP000000583">
    <property type="component" value="Chromosome"/>
</dbReference>
<dbReference type="Proteomes" id="UP000000801">
    <property type="component" value="Chromosome"/>
</dbReference>
<dbReference type="GO" id="GO:0005886">
    <property type="term" value="C:plasma membrane"/>
    <property type="evidence" value="ECO:0007669"/>
    <property type="project" value="UniProtKB-SubCell"/>
</dbReference>
<dbReference type="GO" id="GO:0004190">
    <property type="term" value="F:aspartic-type endopeptidase activity"/>
    <property type="evidence" value="ECO:0007669"/>
    <property type="project" value="UniProtKB-UniRule"/>
</dbReference>
<dbReference type="GO" id="GO:0006508">
    <property type="term" value="P:proteolysis"/>
    <property type="evidence" value="ECO:0007669"/>
    <property type="project" value="UniProtKB-KW"/>
</dbReference>
<dbReference type="HAMAP" id="MF_00161">
    <property type="entry name" value="LspA"/>
    <property type="match status" value="1"/>
</dbReference>
<dbReference type="InterPro" id="IPR001872">
    <property type="entry name" value="Peptidase_A8"/>
</dbReference>
<dbReference type="NCBIfam" id="TIGR00077">
    <property type="entry name" value="lspA"/>
    <property type="match status" value="1"/>
</dbReference>
<dbReference type="PANTHER" id="PTHR33695">
    <property type="entry name" value="LIPOPROTEIN SIGNAL PEPTIDASE"/>
    <property type="match status" value="1"/>
</dbReference>
<dbReference type="PANTHER" id="PTHR33695:SF1">
    <property type="entry name" value="LIPOPROTEIN SIGNAL PEPTIDASE"/>
    <property type="match status" value="1"/>
</dbReference>
<dbReference type="Pfam" id="PF01252">
    <property type="entry name" value="Peptidase_A8"/>
    <property type="match status" value="1"/>
</dbReference>
<dbReference type="PRINTS" id="PR00781">
    <property type="entry name" value="LIPOSIGPTASE"/>
</dbReference>
<dbReference type="PROSITE" id="PS00855">
    <property type="entry name" value="SPASE_II"/>
    <property type="match status" value="1"/>
</dbReference>
<organism>
    <name type="scientific">Chlamydia pneumoniae</name>
    <name type="common">Chlamydophila pneumoniae</name>
    <dbReference type="NCBI Taxonomy" id="83558"/>
    <lineage>
        <taxon>Bacteria</taxon>
        <taxon>Pseudomonadati</taxon>
        <taxon>Chlamydiota</taxon>
        <taxon>Chlamydiia</taxon>
        <taxon>Chlamydiales</taxon>
        <taxon>Chlamydiaceae</taxon>
        <taxon>Chlamydia/Chlamydophila group</taxon>
        <taxon>Chlamydia</taxon>
    </lineage>
</organism>
<gene>
    <name evidence="1" type="primary">lspA</name>
    <name type="ordered locus">CPn_0535</name>
    <name type="ordered locus">CP_0217</name>
    <name type="ordered locus">CpB0556</name>
</gene>
<protein>
    <recommendedName>
        <fullName evidence="1">Lipoprotein signal peptidase</fullName>
        <ecNumber evidence="1">3.4.23.36</ecNumber>
    </recommendedName>
    <alternativeName>
        <fullName evidence="1">Prolipoprotein signal peptidase</fullName>
    </alternativeName>
    <alternativeName>
        <fullName evidence="1">Signal peptidase II</fullName>
        <shortName evidence="1">SPase II</shortName>
    </alternativeName>
</protein>
<proteinExistence type="inferred from homology"/>
<keyword id="KW-0064">Aspartyl protease</keyword>
<keyword id="KW-0997">Cell inner membrane</keyword>
<keyword id="KW-1003">Cell membrane</keyword>
<keyword id="KW-0378">Hydrolase</keyword>
<keyword id="KW-0472">Membrane</keyword>
<keyword id="KW-0645">Protease</keyword>
<keyword id="KW-0812">Transmembrane</keyword>
<keyword id="KW-1133">Transmembrane helix</keyword>
<accession>Q9Z817</accession>
<accession>Q9JQ24</accession>
<feature type="chain" id="PRO_0000178776" description="Lipoprotein signal peptidase">
    <location>
        <begin position="1"/>
        <end position="168"/>
    </location>
</feature>
<feature type="transmembrane region" description="Helical" evidence="1">
    <location>
        <begin position="8"/>
        <end position="28"/>
    </location>
</feature>
<feature type="transmembrane region" description="Helical" evidence="1">
    <location>
        <begin position="70"/>
        <end position="90"/>
    </location>
</feature>
<feature type="transmembrane region" description="Helical" evidence="1">
    <location>
        <begin position="104"/>
        <end position="124"/>
    </location>
</feature>
<feature type="transmembrane region" description="Helical" evidence="1">
    <location>
        <begin position="134"/>
        <end position="154"/>
    </location>
</feature>
<feature type="active site" evidence="1">
    <location>
        <position position="125"/>
    </location>
</feature>
<feature type="active site" evidence="1">
    <location>
        <position position="143"/>
    </location>
</feature>
<sequence>MATRFRSTLLVITLFVLIDWVTKLVVLLQYKDLQILTHPTLYTHSWGRFSFSIAPVFNEGAAFGLFSNYKYFLFLLRIFVILGLLAYLFFKKKSIQSTTQTALVLLCAGAIGNVGDIIFYGHIVDFISFNYKQWAFPTFNVADVLISLGTLLLVYKFYFPTKQTEKKR</sequence>